<sequence length="145" mass="15950">MIALIQRVTRASVTVEGEVTGEIGAGLLVLLGVEKDDDEQKANRLCERVLGYRIFSDAEGKMNLNVQQAGGSVLVVSQFTLAADTERGMRPSFSKGASPDRAEALYDYFVERCRQQEMNTQTGRFAADMQVSLVNDGPVTFWLQV</sequence>
<gene>
    <name evidence="1" type="primary">dtd</name>
    <name type="ordered locus">ECDH10B_4077</name>
</gene>
<reference key="1">
    <citation type="journal article" date="2008" name="J. Bacteriol.">
        <title>The complete genome sequence of Escherichia coli DH10B: insights into the biology of a laboratory workhorse.</title>
        <authorList>
            <person name="Durfee T."/>
            <person name="Nelson R."/>
            <person name="Baldwin S."/>
            <person name="Plunkett G. III"/>
            <person name="Burland V."/>
            <person name="Mau B."/>
            <person name="Petrosino J.F."/>
            <person name="Qin X."/>
            <person name="Muzny D.M."/>
            <person name="Ayele M."/>
            <person name="Gibbs R.A."/>
            <person name="Csorgo B."/>
            <person name="Posfai G."/>
            <person name="Weinstock G.M."/>
            <person name="Blattner F.R."/>
        </authorList>
    </citation>
    <scope>NUCLEOTIDE SEQUENCE [LARGE SCALE GENOMIC DNA]</scope>
    <source>
        <strain>K12 / DH10B</strain>
    </source>
</reference>
<name>DTD_ECODH</name>
<dbReference type="EC" id="3.1.1.96" evidence="1"/>
<dbReference type="EMBL" id="CP000948">
    <property type="protein sequence ID" value="ACB04901.1"/>
    <property type="molecule type" value="Genomic_DNA"/>
</dbReference>
<dbReference type="RefSeq" id="WP_000560983.1">
    <property type="nucleotide sequence ID" value="NC_010473.1"/>
</dbReference>
<dbReference type="SMR" id="B1XB55"/>
<dbReference type="GeneID" id="93778051"/>
<dbReference type="KEGG" id="ecd:ECDH10B_4077"/>
<dbReference type="HOGENOM" id="CLU_076901_1_0_6"/>
<dbReference type="GO" id="GO:0005737">
    <property type="term" value="C:cytoplasm"/>
    <property type="evidence" value="ECO:0007669"/>
    <property type="project" value="UniProtKB-SubCell"/>
</dbReference>
<dbReference type="GO" id="GO:0051500">
    <property type="term" value="F:D-tyrosyl-tRNA(Tyr) deacylase activity"/>
    <property type="evidence" value="ECO:0007669"/>
    <property type="project" value="TreeGrafter"/>
</dbReference>
<dbReference type="GO" id="GO:0106026">
    <property type="term" value="F:Gly-tRNA(Ala) deacylase activity"/>
    <property type="evidence" value="ECO:0007669"/>
    <property type="project" value="UniProtKB-UniRule"/>
</dbReference>
<dbReference type="GO" id="GO:0043908">
    <property type="term" value="F:Ser(Gly)-tRNA(Ala) hydrolase activity"/>
    <property type="evidence" value="ECO:0007669"/>
    <property type="project" value="UniProtKB-UniRule"/>
</dbReference>
<dbReference type="GO" id="GO:0000049">
    <property type="term" value="F:tRNA binding"/>
    <property type="evidence" value="ECO:0007669"/>
    <property type="project" value="UniProtKB-UniRule"/>
</dbReference>
<dbReference type="GO" id="GO:0019478">
    <property type="term" value="P:D-amino acid catabolic process"/>
    <property type="evidence" value="ECO:0007669"/>
    <property type="project" value="UniProtKB-UniRule"/>
</dbReference>
<dbReference type="CDD" id="cd00563">
    <property type="entry name" value="Dtyr_deacylase"/>
    <property type="match status" value="1"/>
</dbReference>
<dbReference type="FunFam" id="3.50.80.10:FF:000001">
    <property type="entry name" value="D-aminoacyl-tRNA deacylase"/>
    <property type="match status" value="1"/>
</dbReference>
<dbReference type="Gene3D" id="3.50.80.10">
    <property type="entry name" value="D-tyrosyl-tRNA(Tyr) deacylase"/>
    <property type="match status" value="1"/>
</dbReference>
<dbReference type="HAMAP" id="MF_00518">
    <property type="entry name" value="Deacylase_Dtd"/>
    <property type="match status" value="1"/>
</dbReference>
<dbReference type="InterPro" id="IPR003732">
    <property type="entry name" value="Daa-tRNA_deacyls_DTD"/>
</dbReference>
<dbReference type="InterPro" id="IPR023509">
    <property type="entry name" value="DTD-like_sf"/>
</dbReference>
<dbReference type="NCBIfam" id="TIGR00256">
    <property type="entry name" value="D-aminoacyl-tRNA deacylase"/>
    <property type="match status" value="1"/>
</dbReference>
<dbReference type="PANTHER" id="PTHR10472:SF5">
    <property type="entry name" value="D-AMINOACYL-TRNA DEACYLASE 1"/>
    <property type="match status" value="1"/>
</dbReference>
<dbReference type="PANTHER" id="PTHR10472">
    <property type="entry name" value="D-TYROSYL-TRNA TYR DEACYLASE"/>
    <property type="match status" value="1"/>
</dbReference>
<dbReference type="Pfam" id="PF02580">
    <property type="entry name" value="Tyr_Deacylase"/>
    <property type="match status" value="1"/>
</dbReference>
<dbReference type="SUPFAM" id="SSF69500">
    <property type="entry name" value="DTD-like"/>
    <property type="match status" value="1"/>
</dbReference>
<organism>
    <name type="scientific">Escherichia coli (strain K12 / DH10B)</name>
    <dbReference type="NCBI Taxonomy" id="316385"/>
    <lineage>
        <taxon>Bacteria</taxon>
        <taxon>Pseudomonadati</taxon>
        <taxon>Pseudomonadota</taxon>
        <taxon>Gammaproteobacteria</taxon>
        <taxon>Enterobacterales</taxon>
        <taxon>Enterobacteriaceae</taxon>
        <taxon>Escherichia</taxon>
    </lineage>
</organism>
<feature type="chain" id="PRO_1000127527" description="D-aminoacyl-tRNA deacylase">
    <location>
        <begin position="1"/>
        <end position="145"/>
    </location>
</feature>
<feature type="short sequence motif" description="Gly-cisPro motif, important for rejection of L-amino acids" evidence="1">
    <location>
        <begin position="137"/>
        <end position="138"/>
    </location>
</feature>
<comment type="function">
    <text evidence="1">An aminoacyl-tRNA editing enzyme that deacylates mischarged D-aminoacyl-tRNAs. Also deacylates mischarged glycyl-tRNA(Ala), protecting cells against glycine mischarging by AlaRS. Acts via tRNA-based rather than protein-based catalysis; rejects L-amino acids rather than detecting D-amino acids in the active site. By recycling D-aminoacyl-tRNA to D-amino acids and free tRNA molecules, this enzyme counteracts the toxicity associated with the formation of D-aminoacyl-tRNA entities in vivo and helps enforce protein L-homochirality.</text>
</comment>
<comment type="catalytic activity">
    <reaction evidence="1">
        <text>glycyl-tRNA(Ala) + H2O = tRNA(Ala) + glycine + H(+)</text>
        <dbReference type="Rhea" id="RHEA:53744"/>
        <dbReference type="Rhea" id="RHEA-COMP:9657"/>
        <dbReference type="Rhea" id="RHEA-COMP:13640"/>
        <dbReference type="ChEBI" id="CHEBI:15377"/>
        <dbReference type="ChEBI" id="CHEBI:15378"/>
        <dbReference type="ChEBI" id="CHEBI:57305"/>
        <dbReference type="ChEBI" id="CHEBI:78442"/>
        <dbReference type="ChEBI" id="CHEBI:78522"/>
        <dbReference type="EC" id="3.1.1.96"/>
    </reaction>
</comment>
<comment type="catalytic activity">
    <reaction evidence="1">
        <text>a D-aminoacyl-tRNA + H2O = a tRNA + a D-alpha-amino acid + H(+)</text>
        <dbReference type="Rhea" id="RHEA:13953"/>
        <dbReference type="Rhea" id="RHEA-COMP:10123"/>
        <dbReference type="Rhea" id="RHEA-COMP:10124"/>
        <dbReference type="ChEBI" id="CHEBI:15377"/>
        <dbReference type="ChEBI" id="CHEBI:15378"/>
        <dbReference type="ChEBI" id="CHEBI:59871"/>
        <dbReference type="ChEBI" id="CHEBI:78442"/>
        <dbReference type="ChEBI" id="CHEBI:79333"/>
        <dbReference type="EC" id="3.1.1.96"/>
    </reaction>
</comment>
<comment type="subunit">
    <text evidence="1">Homodimer.</text>
</comment>
<comment type="subcellular location">
    <subcellularLocation>
        <location evidence="1">Cytoplasm</location>
    </subcellularLocation>
</comment>
<comment type="domain">
    <text evidence="1">A Gly-cisPro motif from one monomer fits into the active site of the other monomer to allow specific chiral rejection of L-amino acids.</text>
</comment>
<comment type="similarity">
    <text evidence="1">Belongs to the DTD family.</text>
</comment>
<proteinExistence type="inferred from homology"/>
<protein>
    <recommendedName>
        <fullName evidence="1">D-aminoacyl-tRNA deacylase</fullName>
        <shortName evidence="1">DTD</shortName>
        <ecNumber evidence="1">3.1.1.96</ecNumber>
    </recommendedName>
    <alternativeName>
        <fullName evidence="1">Gly-tRNA(Ala) deacylase</fullName>
    </alternativeName>
</protein>
<keyword id="KW-0963">Cytoplasm</keyword>
<keyword id="KW-0378">Hydrolase</keyword>
<keyword id="KW-0694">RNA-binding</keyword>
<keyword id="KW-0820">tRNA-binding</keyword>
<evidence type="ECO:0000255" key="1">
    <source>
        <dbReference type="HAMAP-Rule" id="MF_00518"/>
    </source>
</evidence>
<accession>B1XB55</accession>